<proteinExistence type="inferred from homology"/>
<comment type="function">
    <text evidence="1">Negatively regulates the transcription of the flagellar master operon flhDC by binding to the upstream region of the operon.</text>
</comment>
<comment type="similarity">
    <text evidence="2">Belongs to the LysR transcriptional regulatory family.</text>
</comment>
<keyword id="KW-0238">DNA-binding</keyword>
<keyword id="KW-0678">Repressor</keyword>
<keyword id="KW-0804">Transcription</keyword>
<keyword id="KW-0805">Transcription regulation</keyword>
<gene>
    <name evidence="1" type="primary">hdfR</name>
    <name type="ordered locus">SNSL254_A4180</name>
</gene>
<sequence>MDTELLKTFLEVSRTRHFGRAAEALYLTQSAVSFRIRQLENQLGVNLFTRHRNNIRLTTAGEKLLPYAETLMNTWQAARKEVAHTSRHNEFSIGASASLWECMLNAWLGRLYQLQEPQSGLQFEARIAQRQSLVKQLHERQLDLLITTEAPKMDEFSSQLLGHFTLALYCSSPARKKSELNYLRLEWGPDFQQHETGLIAADEVPVLTTSSAELARQQLSALNGCSWLPVNWANEKGGLHTVADSATLSRPLYAIWLQNSDKYSLICDLLKTDVLDGQ</sequence>
<name>HDFR_SALNS</name>
<accession>B4SYF7</accession>
<dbReference type="EMBL" id="CP001113">
    <property type="protein sequence ID" value="ACF63495.1"/>
    <property type="molecule type" value="Genomic_DNA"/>
</dbReference>
<dbReference type="SMR" id="B4SYF7"/>
<dbReference type="KEGG" id="see:SNSL254_A4180"/>
<dbReference type="HOGENOM" id="CLU_039613_8_2_6"/>
<dbReference type="Proteomes" id="UP000008824">
    <property type="component" value="Chromosome"/>
</dbReference>
<dbReference type="GO" id="GO:0003677">
    <property type="term" value="F:DNA binding"/>
    <property type="evidence" value="ECO:0007669"/>
    <property type="project" value="UniProtKB-KW"/>
</dbReference>
<dbReference type="GO" id="GO:0003700">
    <property type="term" value="F:DNA-binding transcription factor activity"/>
    <property type="evidence" value="ECO:0007669"/>
    <property type="project" value="UniProtKB-UniRule"/>
</dbReference>
<dbReference type="GO" id="GO:0045892">
    <property type="term" value="P:negative regulation of DNA-templated transcription"/>
    <property type="evidence" value="ECO:0007669"/>
    <property type="project" value="UniProtKB-UniRule"/>
</dbReference>
<dbReference type="FunFam" id="1.10.10.10:FF:000001">
    <property type="entry name" value="LysR family transcriptional regulator"/>
    <property type="match status" value="1"/>
</dbReference>
<dbReference type="Gene3D" id="1.10.10.10">
    <property type="entry name" value="Winged helix-like DNA-binding domain superfamily/Winged helix DNA-binding domain"/>
    <property type="match status" value="1"/>
</dbReference>
<dbReference type="HAMAP" id="MF_01233">
    <property type="entry name" value="HTH_type_HdfR"/>
    <property type="match status" value="1"/>
</dbReference>
<dbReference type="InterPro" id="IPR050176">
    <property type="entry name" value="LTTR"/>
</dbReference>
<dbReference type="InterPro" id="IPR005119">
    <property type="entry name" value="LysR_subst-bd"/>
</dbReference>
<dbReference type="InterPro" id="IPR020890">
    <property type="entry name" value="Tscrpt_reg_HTH_HdfR"/>
</dbReference>
<dbReference type="InterPro" id="IPR000847">
    <property type="entry name" value="Tscrpt_reg_HTH_LysR"/>
</dbReference>
<dbReference type="InterPro" id="IPR036388">
    <property type="entry name" value="WH-like_DNA-bd_sf"/>
</dbReference>
<dbReference type="InterPro" id="IPR036390">
    <property type="entry name" value="WH_DNA-bd_sf"/>
</dbReference>
<dbReference type="NCBIfam" id="NF002946">
    <property type="entry name" value="PRK03601.1"/>
    <property type="match status" value="1"/>
</dbReference>
<dbReference type="PANTHER" id="PTHR30579:SF8">
    <property type="entry name" value="HTH-TYPE TRANSCRIPTIONAL REGULATOR HDFR"/>
    <property type="match status" value="1"/>
</dbReference>
<dbReference type="PANTHER" id="PTHR30579">
    <property type="entry name" value="TRANSCRIPTIONAL REGULATOR"/>
    <property type="match status" value="1"/>
</dbReference>
<dbReference type="Pfam" id="PF00126">
    <property type="entry name" value="HTH_1"/>
    <property type="match status" value="1"/>
</dbReference>
<dbReference type="Pfam" id="PF03466">
    <property type="entry name" value="LysR_substrate"/>
    <property type="match status" value="1"/>
</dbReference>
<dbReference type="PRINTS" id="PR00039">
    <property type="entry name" value="HTHLYSR"/>
</dbReference>
<dbReference type="SUPFAM" id="SSF53850">
    <property type="entry name" value="Periplasmic binding protein-like II"/>
    <property type="match status" value="1"/>
</dbReference>
<dbReference type="SUPFAM" id="SSF46785">
    <property type="entry name" value="Winged helix' DNA-binding domain"/>
    <property type="match status" value="1"/>
</dbReference>
<dbReference type="PROSITE" id="PS50931">
    <property type="entry name" value="HTH_LYSR"/>
    <property type="match status" value="1"/>
</dbReference>
<reference key="1">
    <citation type="journal article" date="2011" name="J. Bacteriol.">
        <title>Comparative genomics of 28 Salmonella enterica isolates: evidence for CRISPR-mediated adaptive sublineage evolution.</title>
        <authorList>
            <person name="Fricke W.F."/>
            <person name="Mammel M.K."/>
            <person name="McDermott P.F."/>
            <person name="Tartera C."/>
            <person name="White D.G."/>
            <person name="Leclerc J.E."/>
            <person name="Ravel J."/>
            <person name="Cebula T.A."/>
        </authorList>
    </citation>
    <scope>NUCLEOTIDE SEQUENCE [LARGE SCALE GENOMIC DNA]</scope>
    <source>
        <strain>SL254</strain>
    </source>
</reference>
<protein>
    <recommendedName>
        <fullName evidence="1">HTH-type transcriptional regulator HdfR</fullName>
    </recommendedName>
    <alternativeName>
        <fullName evidence="1">H-NS-dependent flhDC regulator</fullName>
    </alternativeName>
</protein>
<organism>
    <name type="scientific">Salmonella newport (strain SL254)</name>
    <dbReference type="NCBI Taxonomy" id="423368"/>
    <lineage>
        <taxon>Bacteria</taxon>
        <taxon>Pseudomonadati</taxon>
        <taxon>Pseudomonadota</taxon>
        <taxon>Gammaproteobacteria</taxon>
        <taxon>Enterobacterales</taxon>
        <taxon>Enterobacteriaceae</taxon>
        <taxon>Salmonella</taxon>
    </lineage>
</organism>
<evidence type="ECO:0000255" key="1">
    <source>
        <dbReference type="HAMAP-Rule" id="MF_01233"/>
    </source>
</evidence>
<evidence type="ECO:0000305" key="2"/>
<feature type="chain" id="PRO_1000139674" description="HTH-type transcriptional regulator HdfR">
    <location>
        <begin position="1"/>
        <end position="278"/>
    </location>
</feature>
<feature type="domain" description="HTH lysR-type" evidence="1">
    <location>
        <begin position="1"/>
        <end position="58"/>
    </location>
</feature>
<feature type="DNA-binding region" description="H-T-H motif" evidence="1">
    <location>
        <begin position="18"/>
        <end position="37"/>
    </location>
</feature>